<protein>
    <recommendedName>
        <fullName>Purine nucleoside phosphorylase SACOL1200</fullName>
        <ecNumber evidence="2">2.4.2.1</ecNumber>
    </recommendedName>
    <alternativeName>
        <fullName>Adenosine deaminase SACOL1200</fullName>
        <ecNumber evidence="2">3.5.4.4</ecNumber>
    </alternativeName>
    <alternativeName>
        <fullName>S-methyl-5'-thioadenosine phosphorylase SACOL1200</fullName>
        <ecNumber evidence="2">2.4.2.28</ecNumber>
    </alternativeName>
</protein>
<reference key="1">
    <citation type="journal article" date="2005" name="J. Bacteriol.">
        <title>Insights on evolution of virulence and resistance from the complete genome analysis of an early methicillin-resistant Staphylococcus aureus strain and a biofilm-producing methicillin-resistant Staphylococcus epidermidis strain.</title>
        <authorList>
            <person name="Gill S.R."/>
            <person name="Fouts D.E."/>
            <person name="Archer G.L."/>
            <person name="Mongodin E.F."/>
            <person name="DeBoy R.T."/>
            <person name="Ravel J."/>
            <person name="Paulsen I.T."/>
            <person name="Kolonay J.F."/>
            <person name="Brinkac L.M."/>
            <person name="Beanan M.J."/>
            <person name="Dodson R.J."/>
            <person name="Daugherty S.C."/>
            <person name="Madupu R."/>
            <person name="Angiuoli S.V."/>
            <person name="Durkin A.S."/>
            <person name="Haft D.H."/>
            <person name="Vamathevan J.J."/>
            <person name="Khouri H."/>
            <person name="Utterback T.R."/>
            <person name="Lee C."/>
            <person name="Dimitrov G."/>
            <person name="Jiang L."/>
            <person name="Qin H."/>
            <person name="Weidman J."/>
            <person name="Tran K."/>
            <person name="Kang K.H."/>
            <person name="Hance I.R."/>
            <person name="Nelson K.E."/>
            <person name="Fraser C.M."/>
        </authorList>
    </citation>
    <scope>NUCLEOTIDE SEQUENCE [LARGE SCALE GENOMIC DNA]</scope>
    <source>
        <strain>COL</strain>
    </source>
</reference>
<feature type="chain" id="PRO_0000163171" description="Purine nucleoside phosphorylase SACOL1200">
    <location>
        <begin position="1"/>
        <end position="263"/>
    </location>
</feature>
<feature type="binding site" evidence="2">
    <location>
        <position position="79"/>
    </location>
    <ligand>
        <name>Zn(2+)</name>
        <dbReference type="ChEBI" id="CHEBI:29105"/>
        <note>catalytic</note>
    </ligand>
</feature>
<feature type="binding site" evidence="2">
    <location>
        <position position="124"/>
    </location>
    <ligand>
        <name>Zn(2+)</name>
        <dbReference type="ChEBI" id="CHEBI:29105"/>
        <note>catalytic</note>
    </ligand>
</feature>
<feature type="binding site" evidence="2">
    <location>
        <position position="141"/>
    </location>
    <ligand>
        <name>Zn(2+)</name>
        <dbReference type="ChEBI" id="CHEBI:29105"/>
        <note>catalytic</note>
    </ligand>
</feature>
<accession>Q5HGP4</accession>
<comment type="function">
    <text evidence="2">Purine nucleoside enzyme that catalyzes the phosphorolysis of adenosine and inosine nucleosides, yielding D-ribose 1-phosphate and the respective free bases, adenine and hypoxanthine. Also catalyzes the phosphorolysis of S-methyl-5'-thioadenosine into adenine and S-methyl-5-thio-alpha-D-ribose 1-phosphate. Also has adenosine deaminase activity.</text>
</comment>
<comment type="catalytic activity">
    <reaction evidence="2">
        <text>adenosine + phosphate = alpha-D-ribose 1-phosphate + adenine</text>
        <dbReference type="Rhea" id="RHEA:27642"/>
        <dbReference type="ChEBI" id="CHEBI:16335"/>
        <dbReference type="ChEBI" id="CHEBI:16708"/>
        <dbReference type="ChEBI" id="CHEBI:43474"/>
        <dbReference type="ChEBI" id="CHEBI:57720"/>
        <dbReference type="EC" id="2.4.2.1"/>
    </reaction>
    <physiologicalReaction direction="left-to-right" evidence="2">
        <dbReference type="Rhea" id="RHEA:27643"/>
    </physiologicalReaction>
</comment>
<comment type="catalytic activity">
    <reaction evidence="2">
        <text>S-methyl-5'-thioadenosine + phosphate = 5-(methylsulfanyl)-alpha-D-ribose 1-phosphate + adenine</text>
        <dbReference type="Rhea" id="RHEA:11852"/>
        <dbReference type="ChEBI" id="CHEBI:16708"/>
        <dbReference type="ChEBI" id="CHEBI:17509"/>
        <dbReference type="ChEBI" id="CHEBI:43474"/>
        <dbReference type="ChEBI" id="CHEBI:58533"/>
        <dbReference type="EC" id="2.4.2.28"/>
    </reaction>
    <physiologicalReaction direction="left-to-right" evidence="2">
        <dbReference type="Rhea" id="RHEA:11853"/>
    </physiologicalReaction>
</comment>
<comment type="catalytic activity">
    <reaction evidence="2">
        <text>inosine + phosphate = alpha-D-ribose 1-phosphate + hypoxanthine</text>
        <dbReference type="Rhea" id="RHEA:27646"/>
        <dbReference type="ChEBI" id="CHEBI:17368"/>
        <dbReference type="ChEBI" id="CHEBI:17596"/>
        <dbReference type="ChEBI" id="CHEBI:43474"/>
        <dbReference type="ChEBI" id="CHEBI:57720"/>
        <dbReference type="EC" id="2.4.2.1"/>
    </reaction>
    <physiologicalReaction direction="left-to-right" evidence="2">
        <dbReference type="Rhea" id="RHEA:27647"/>
    </physiologicalReaction>
</comment>
<comment type="catalytic activity">
    <reaction evidence="2">
        <text>adenosine + H2O + H(+) = inosine + NH4(+)</text>
        <dbReference type="Rhea" id="RHEA:24408"/>
        <dbReference type="ChEBI" id="CHEBI:15377"/>
        <dbReference type="ChEBI" id="CHEBI:15378"/>
        <dbReference type="ChEBI" id="CHEBI:16335"/>
        <dbReference type="ChEBI" id="CHEBI:17596"/>
        <dbReference type="ChEBI" id="CHEBI:28938"/>
        <dbReference type="EC" id="3.5.4.4"/>
    </reaction>
    <physiologicalReaction direction="left-to-right" evidence="2">
        <dbReference type="Rhea" id="RHEA:24409"/>
    </physiologicalReaction>
</comment>
<comment type="cofactor">
    <cofactor evidence="1">
        <name>Cu(2+)</name>
        <dbReference type="ChEBI" id="CHEBI:29036"/>
    </cofactor>
    <cofactor evidence="2">
        <name>Zn(2+)</name>
        <dbReference type="ChEBI" id="CHEBI:29105"/>
    </cofactor>
</comment>
<comment type="subunit">
    <text evidence="3">Homodimer.</text>
</comment>
<comment type="similarity">
    <text evidence="4">Belongs to the purine nucleoside phosphorylase YfiH/LACC1 family.</text>
</comment>
<proteinExistence type="inferred from homology"/>
<dbReference type="EC" id="2.4.2.1" evidence="2"/>
<dbReference type="EC" id="3.5.4.4" evidence="2"/>
<dbReference type="EC" id="2.4.2.28" evidence="2"/>
<dbReference type="EMBL" id="CP000046">
    <property type="protein sequence ID" value="AAW38037.1"/>
    <property type="molecule type" value="Genomic_DNA"/>
</dbReference>
<dbReference type="SMR" id="Q5HGP4"/>
<dbReference type="KEGG" id="sac:SACOL1200"/>
<dbReference type="HOGENOM" id="CLU_065784_0_0_9"/>
<dbReference type="Proteomes" id="UP000000530">
    <property type="component" value="Chromosome"/>
</dbReference>
<dbReference type="GO" id="GO:0004000">
    <property type="term" value="F:adenosine deaminase activity"/>
    <property type="evidence" value="ECO:0007669"/>
    <property type="project" value="RHEA"/>
</dbReference>
<dbReference type="GO" id="GO:0005507">
    <property type="term" value="F:copper ion binding"/>
    <property type="evidence" value="ECO:0007669"/>
    <property type="project" value="TreeGrafter"/>
</dbReference>
<dbReference type="GO" id="GO:0016491">
    <property type="term" value="F:oxidoreductase activity"/>
    <property type="evidence" value="ECO:0007669"/>
    <property type="project" value="UniProtKB-KW"/>
</dbReference>
<dbReference type="GO" id="GO:0017061">
    <property type="term" value="F:S-methyl-5-thioadenosine phosphorylase activity"/>
    <property type="evidence" value="ECO:0007669"/>
    <property type="project" value="UniProtKB-EC"/>
</dbReference>
<dbReference type="CDD" id="cd16833">
    <property type="entry name" value="YfiH"/>
    <property type="match status" value="1"/>
</dbReference>
<dbReference type="Gene3D" id="3.60.140.10">
    <property type="entry name" value="CNF1/YfiH-like putative cysteine hydrolases"/>
    <property type="match status" value="1"/>
</dbReference>
<dbReference type="InterPro" id="IPR003730">
    <property type="entry name" value="Cu_polyphenol_OxRdtase"/>
</dbReference>
<dbReference type="InterPro" id="IPR038371">
    <property type="entry name" value="Cu_polyphenol_OxRdtase_sf"/>
</dbReference>
<dbReference type="InterPro" id="IPR011324">
    <property type="entry name" value="Cytotoxic_necrot_fac-like_cat"/>
</dbReference>
<dbReference type="NCBIfam" id="TIGR00726">
    <property type="entry name" value="peptidoglycan editing factor PgeF"/>
    <property type="match status" value="1"/>
</dbReference>
<dbReference type="PANTHER" id="PTHR30616:SF2">
    <property type="entry name" value="PURINE NUCLEOSIDE PHOSPHORYLASE LACC1"/>
    <property type="match status" value="1"/>
</dbReference>
<dbReference type="PANTHER" id="PTHR30616">
    <property type="entry name" value="UNCHARACTERIZED PROTEIN YFIH"/>
    <property type="match status" value="1"/>
</dbReference>
<dbReference type="Pfam" id="PF02578">
    <property type="entry name" value="Cu-oxidase_4"/>
    <property type="match status" value="1"/>
</dbReference>
<dbReference type="SUPFAM" id="SSF64438">
    <property type="entry name" value="CNF1/YfiH-like putative cysteine hydrolases"/>
    <property type="match status" value="1"/>
</dbReference>
<sequence>MNDNFKKQPHHLIYEELLQQGITLGITTRGDGLSDYPKNAFNMARYIDDRPYNITQHQLQLAEEIAFDRKNWVFPIQTHENKVACITKDDIGTNIDTLTDALHGIDAMYTYDSNVLLTMCYADCVPVYFYSTKHHFIALAHAGWRGTYTEIVKEVLKHVNFDLKDLHVVIGPSTSSSYEINDDIKNKFETLPIDSANYIETRGRDRHGIDLKKANAALLIYYGVPKENIYTTAYATSEHLELFFSYRLEKGQTGRMLAFIGQQ</sequence>
<evidence type="ECO:0000250" key="1">
    <source>
        <dbReference type="UniProtKB" id="P33644"/>
    </source>
</evidence>
<evidence type="ECO:0000250" key="2">
    <source>
        <dbReference type="UniProtKB" id="P84138"/>
    </source>
</evidence>
<evidence type="ECO:0000250" key="3">
    <source>
        <dbReference type="UniProtKB" id="Q1EIR0"/>
    </source>
</evidence>
<evidence type="ECO:0000305" key="4"/>
<keyword id="KW-0186">Copper</keyword>
<keyword id="KW-0378">Hydrolase</keyword>
<keyword id="KW-0479">Metal-binding</keyword>
<keyword id="KW-0560">Oxidoreductase</keyword>
<keyword id="KW-0808">Transferase</keyword>
<keyword id="KW-0862">Zinc</keyword>
<organism>
    <name type="scientific">Staphylococcus aureus (strain COL)</name>
    <dbReference type="NCBI Taxonomy" id="93062"/>
    <lineage>
        <taxon>Bacteria</taxon>
        <taxon>Bacillati</taxon>
        <taxon>Bacillota</taxon>
        <taxon>Bacilli</taxon>
        <taxon>Bacillales</taxon>
        <taxon>Staphylococcaceae</taxon>
        <taxon>Staphylococcus</taxon>
    </lineage>
</organism>
<gene>
    <name type="ordered locus">SACOL1200</name>
</gene>
<name>PURNU_STAAC</name>